<accession>Q7V7Q3</accession>
<evidence type="ECO:0000255" key="1">
    <source>
        <dbReference type="HAMAP-Rule" id="MF_00315"/>
    </source>
</evidence>
<reference key="1">
    <citation type="journal article" date="2003" name="Nature">
        <title>Genome divergence in two Prochlorococcus ecotypes reflects oceanic niche differentiation.</title>
        <authorList>
            <person name="Rocap G."/>
            <person name="Larimer F.W."/>
            <person name="Lamerdin J.E."/>
            <person name="Malfatti S."/>
            <person name="Chain P."/>
            <person name="Ahlgren N.A."/>
            <person name="Arellano A."/>
            <person name="Coleman M."/>
            <person name="Hauser L."/>
            <person name="Hess W.R."/>
            <person name="Johnson Z.I."/>
            <person name="Land M.L."/>
            <person name="Lindell D."/>
            <person name="Post A.F."/>
            <person name="Regala W."/>
            <person name="Shah M."/>
            <person name="Shaw S.L."/>
            <person name="Steglich C."/>
            <person name="Sullivan M.B."/>
            <person name="Ting C.S."/>
            <person name="Tolonen A."/>
            <person name="Webb E.A."/>
            <person name="Zinser E.R."/>
            <person name="Chisholm S.W."/>
        </authorList>
    </citation>
    <scope>NUCLEOTIDE SEQUENCE [LARGE SCALE GENOMIC DNA]</scope>
    <source>
        <strain>MIT 9313</strain>
    </source>
</reference>
<gene>
    <name evidence="1" type="primary">dxs</name>
    <name type="ordered locus">PMT_0685</name>
</gene>
<comment type="function">
    <text evidence="1">Catalyzes the acyloin condensation reaction between C atoms 2 and 3 of pyruvate and glyceraldehyde 3-phosphate to yield 1-deoxy-D-xylulose-5-phosphate (DXP).</text>
</comment>
<comment type="catalytic activity">
    <reaction evidence="1">
        <text>D-glyceraldehyde 3-phosphate + pyruvate + H(+) = 1-deoxy-D-xylulose 5-phosphate + CO2</text>
        <dbReference type="Rhea" id="RHEA:12605"/>
        <dbReference type="ChEBI" id="CHEBI:15361"/>
        <dbReference type="ChEBI" id="CHEBI:15378"/>
        <dbReference type="ChEBI" id="CHEBI:16526"/>
        <dbReference type="ChEBI" id="CHEBI:57792"/>
        <dbReference type="ChEBI" id="CHEBI:59776"/>
        <dbReference type="EC" id="2.2.1.7"/>
    </reaction>
</comment>
<comment type="cofactor">
    <cofactor evidence="1">
        <name>Mg(2+)</name>
        <dbReference type="ChEBI" id="CHEBI:18420"/>
    </cofactor>
    <text evidence="1">Binds 1 Mg(2+) ion per subunit.</text>
</comment>
<comment type="cofactor">
    <cofactor evidence="1">
        <name>thiamine diphosphate</name>
        <dbReference type="ChEBI" id="CHEBI:58937"/>
    </cofactor>
    <text evidence="1">Binds 1 thiamine pyrophosphate per subunit.</text>
</comment>
<comment type="pathway">
    <text evidence="1">Metabolic intermediate biosynthesis; 1-deoxy-D-xylulose 5-phosphate biosynthesis; 1-deoxy-D-xylulose 5-phosphate from D-glyceraldehyde 3-phosphate and pyruvate: step 1/1.</text>
</comment>
<comment type="subunit">
    <text evidence="1">Homodimer.</text>
</comment>
<comment type="similarity">
    <text evidence="1">Belongs to the transketolase family. DXPS subfamily.</text>
</comment>
<sequence length="644" mass="69098">MRLSELTHPNQLHGLSIAELEDVARQIRERHLEVVSTSGGHLGPGLGVVELTLALYQTLDLDHDRVVWDVGHQAYPHKLITGRYGDFNTLRQQGGVAGYLKRCESSFDHFGAGHASTSISAALGMAVARERRGESFKCVAVIGDGALTGGIALEAINHAGHMPNTPFLVVLNDNDMSISPPVGALSTHLNRMRHSAPVQFISDSVEERVKSLPFMGGELPAELDLLKGSMRRLSVPKVGAVFEELGFTYMGPIDGHDIERMVRTFETAHKVGGPVLVHVVTTKGKGYPYAEADQVGYHAQSAFDLSTGKALPSKGKKPPSYSKVFGETLIKLCQQDSTVVGITAAMATGTGLDLLQKAVPEQYIDVGIAEQHAVTLAAGMACEGLKPVLAIYSTFLQRAFDQLIHDVGIQNLPVTFVMDRAGIVGADGPTHQGQYDISYFRAIPNFTVMAPKDEAELQRMLVTCLQHQGPAALRIPRGSGEGVPLLDEGWKPLAIGRGEVLCEGDDLLIVAYGVMVPAAMITAQLLQEAGIKATVINARFLRPLDQALIHPLARRIGSVVTMEEGALAGGFGAAVVESLSDQDVLVPTFRIGIPDQLVDHASPQQSREALGLTPTQMSERIQEHFCLNSKPSLVGQEAPQALST</sequence>
<keyword id="KW-0414">Isoprene biosynthesis</keyword>
<keyword id="KW-0460">Magnesium</keyword>
<keyword id="KW-0479">Metal-binding</keyword>
<keyword id="KW-1185">Reference proteome</keyword>
<keyword id="KW-0784">Thiamine biosynthesis</keyword>
<keyword id="KW-0786">Thiamine pyrophosphate</keyword>
<keyword id="KW-0808">Transferase</keyword>
<organism>
    <name type="scientific">Prochlorococcus marinus (strain MIT 9313)</name>
    <dbReference type="NCBI Taxonomy" id="74547"/>
    <lineage>
        <taxon>Bacteria</taxon>
        <taxon>Bacillati</taxon>
        <taxon>Cyanobacteriota</taxon>
        <taxon>Cyanophyceae</taxon>
        <taxon>Synechococcales</taxon>
        <taxon>Prochlorococcaceae</taxon>
        <taxon>Prochlorococcus</taxon>
    </lineage>
</organism>
<dbReference type="EC" id="2.2.1.7" evidence="1"/>
<dbReference type="EMBL" id="BX548175">
    <property type="protein sequence ID" value="CAE20860.1"/>
    <property type="molecule type" value="Genomic_DNA"/>
</dbReference>
<dbReference type="RefSeq" id="WP_011130063.1">
    <property type="nucleotide sequence ID" value="NC_005071.1"/>
</dbReference>
<dbReference type="SMR" id="Q7V7Q3"/>
<dbReference type="KEGG" id="pmt:PMT_0685"/>
<dbReference type="eggNOG" id="COG1154">
    <property type="taxonomic scope" value="Bacteria"/>
</dbReference>
<dbReference type="HOGENOM" id="CLU_009227_1_4_3"/>
<dbReference type="OrthoDB" id="9803371at2"/>
<dbReference type="UniPathway" id="UPA00064">
    <property type="reaction ID" value="UER00091"/>
</dbReference>
<dbReference type="Proteomes" id="UP000001423">
    <property type="component" value="Chromosome"/>
</dbReference>
<dbReference type="GO" id="GO:0005829">
    <property type="term" value="C:cytosol"/>
    <property type="evidence" value="ECO:0007669"/>
    <property type="project" value="TreeGrafter"/>
</dbReference>
<dbReference type="GO" id="GO:0008661">
    <property type="term" value="F:1-deoxy-D-xylulose-5-phosphate synthase activity"/>
    <property type="evidence" value="ECO:0007669"/>
    <property type="project" value="UniProtKB-UniRule"/>
</dbReference>
<dbReference type="GO" id="GO:0000287">
    <property type="term" value="F:magnesium ion binding"/>
    <property type="evidence" value="ECO:0007669"/>
    <property type="project" value="UniProtKB-UniRule"/>
</dbReference>
<dbReference type="GO" id="GO:0030976">
    <property type="term" value="F:thiamine pyrophosphate binding"/>
    <property type="evidence" value="ECO:0007669"/>
    <property type="project" value="UniProtKB-UniRule"/>
</dbReference>
<dbReference type="GO" id="GO:0052865">
    <property type="term" value="P:1-deoxy-D-xylulose 5-phosphate biosynthetic process"/>
    <property type="evidence" value="ECO:0007669"/>
    <property type="project" value="UniProtKB-UniPathway"/>
</dbReference>
<dbReference type="GO" id="GO:0019288">
    <property type="term" value="P:isopentenyl diphosphate biosynthetic process, methylerythritol 4-phosphate pathway"/>
    <property type="evidence" value="ECO:0007669"/>
    <property type="project" value="TreeGrafter"/>
</dbReference>
<dbReference type="GO" id="GO:0016114">
    <property type="term" value="P:terpenoid biosynthetic process"/>
    <property type="evidence" value="ECO:0007669"/>
    <property type="project" value="UniProtKB-UniRule"/>
</dbReference>
<dbReference type="GO" id="GO:0009228">
    <property type="term" value="P:thiamine biosynthetic process"/>
    <property type="evidence" value="ECO:0007669"/>
    <property type="project" value="UniProtKB-UniRule"/>
</dbReference>
<dbReference type="CDD" id="cd02007">
    <property type="entry name" value="TPP_DXS"/>
    <property type="match status" value="1"/>
</dbReference>
<dbReference type="CDD" id="cd07033">
    <property type="entry name" value="TPP_PYR_DXS_TK_like"/>
    <property type="match status" value="1"/>
</dbReference>
<dbReference type="FunFam" id="3.40.50.920:FF:000002">
    <property type="entry name" value="1-deoxy-D-xylulose-5-phosphate synthase"/>
    <property type="match status" value="1"/>
</dbReference>
<dbReference type="FunFam" id="3.40.50.970:FF:000005">
    <property type="entry name" value="1-deoxy-D-xylulose-5-phosphate synthase"/>
    <property type="match status" value="1"/>
</dbReference>
<dbReference type="Gene3D" id="3.40.50.920">
    <property type="match status" value="1"/>
</dbReference>
<dbReference type="Gene3D" id="3.40.50.970">
    <property type="match status" value="2"/>
</dbReference>
<dbReference type="HAMAP" id="MF_00315">
    <property type="entry name" value="DXP_synth"/>
    <property type="match status" value="1"/>
</dbReference>
<dbReference type="InterPro" id="IPR005477">
    <property type="entry name" value="Dxylulose-5-P_synthase"/>
</dbReference>
<dbReference type="InterPro" id="IPR029061">
    <property type="entry name" value="THDP-binding"/>
</dbReference>
<dbReference type="InterPro" id="IPR009014">
    <property type="entry name" value="Transketo_C/PFOR_II"/>
</dbReference>
<dbReference type="InterPro" id="IPR005475">
    <property type="entry name" value="Transketolase-like_Pyr-bd"/>
</dbReference>
<dbReference type="InterPro" id="IPR020826">
    <property type="entry name" value="Transketolase_BS"/>
</dbReference>
<dbReference type="InterPro" id="IPR033248">
    <property type="entry name" value="Transketolase_C"/>
</dbReference>
<dbReference type="InterPro" id="IPR049557">
    <property type="entry name" value="Transketolase_CS"/>
</dbReference>
<dbReference type="NCBIfam" id="TIGR00204">
    <property type="entry name" value="dxs"/>
    <property type="match status" value="1"/>
</dbReference>
<dbReference type="NCBIfam" id="NF003933">
    <property type="entry name" value="PRK05444.2-2"/>
    <property type="match status" value="1"/>
</dbReference>
<dbReference type="PANTHER" id="PTHR43322">
    <property type="entry name" value="1-D-DEOXYXYLULOSE 5-PHOSPHATE SYNTHASE-RELATED"/>
    <property type="match status" value="1"/>
</dbReference>
<dbReference type="PANTHER" id="PTHR43322:SF5">
    <property type="entry name" value="1-DEOXY-D-XYLULOSE-5-PHOSPHATE SYNTHASE, CHLOROPLASTIC"/>
    <property type="match status" value="1"/>
</dbReference>
<dbReference type="Pfam" id="PF13292">
    <property type="entry name" value="DXP_synthase_N"/>
    <property type="match status" value="1"/>
</dbReference>
<dbReference type="Pfam" id="PF02779">
    <property type="entry name" value="Transket_pyr"/>
    <property type="match status" value="1"/>
</dbReference>
<dbReference type="Pfam" id="PF02780">
    <property type="entry name" value="Transketolase_C"/>
    <property type="match status" value="1"/>
</dbReference>
<dbReference type="SMART" id="SM00861">
    <property type="entry name" value="Transket_pyr"/>
    <property type="match status" value="1"/>
</dbReference>
<dbReference type="SUPFAM" id="SSF52518">
    <property type="entry name" value="Thiamin diphosphate-binding fold (THDP-binding)"/>
    <property type="match status" value="2"/>
</dbReference>
<dbReference type="SUPFAM" id="SSF52922">
    <property type="entry name" value="TK C-terminal domain-like"/>
    <property type="match status" value="1"/>
</dbReference>
<dbReference type="PROSITE" id="PS00801">
    <property type="entry name" value="TRANSKETOLASE_1"/>
    <property type="match status" value="1"/>
</dbReference>
<dbReference type="PROSITE" id="PS00802">
    <property type="entry name" value="TRANSKETOLASE_2"/>
    <property type="match status" value="1"/>
</dbReference>
<protein>
    <recommendedName>
        <fullName evidence="1">1-deoxy-D-xylulose-5-phosphate synthase</fullName>
        <ecNumber evidence="1">2.2.1.7</ecNumber>
    </recommendedName>
    <alternativeName>
        <fullName evidence="1">1-deoxyxylulose-5-phosphate synthase</fullName>
        <shortName evidence="1">DXP synthase</shortName>
        <shortName evidence="1">DXPS</shortName>
    </alternativeName>
</protein>
<feature type="chain" id="PRO_0000189140" description="1-deoxy-D-xylulose-5-phosphate synthase">
    <location>
        <begin position="1"/>
        <end position="644"/>
    </location>
</feature>
<feature type="binding site" evidence="1">
    <location>
        <position position="72"/>
    </location>
    <ligand>
        <name>thiamine diphosphate</name>
        <dbReference type="ChEBI" id="CHEBI:58937"/>
    </ligand>
</feature>
<feature type="binding site" evidence="1">
    <location>
        <begin position="113"/>
        <end position="115"/>
    </location>
    <ligand>
        <name>thiamine diphosphate</name>
        <dbReference type="ChEBI" id="CHEBI:58937"/>
    </ligand>
</feature>
<feature type="binding site" evidence="1">
    <location>
        <position position="144"/>
    </location>
    <ligand>
        <name>Mg(2+)</name>
        <dbReference type="ChEBI" id="CHEBI:18420"/>
    </ligand>
</feature>
<feature type="binding site" evidence="1">
    <location>
        <begin position="145"/>
        <end position="146"/>
    </location>
    <ligand>
        <name>thiamine diphosphate</name>
        <dbReference type="ChEBI" id="CHEBI:58937"/>
    </ligand>
</feature>
<feature type="binding site" evidence="1">
    <location>
        <position position="174"/>
    </location>
    <ligand>
        <name>Mg(2+)</name>
        <dbReference type="ChEBI" id="CHEBI:18420"/>
    </ligand>
</feature>
<feature type="binding site" evidence="1">
    <location>
        <position position="174"/>
    </location>
    <ligand>
        <name>thiamine diphosphate</name>
        <dbReference type="ChEBI" id="CHEBI:58937"/>
    </ligand>
</feature>
<feature type="binding site" evidence="1">
    <location>
        <position position="287"/>
    </location>
    <ligand>
        <name>thiamine diphosphate</name>
        <dbReference type="ChEBI" id="CHEBI:58937"/>
    </ligand>
</feature>
<feature type="binding site" evidence="1">
    <location>
        <position position="370"/>
    </location>
    <ligand>
        <name>thiamine diphosphate</name>
        <dbReference type="ChEBI" id="CHEBI:58937"/>
    </ligand>
</feature>
<name>DXS_PROMM</name>
<proteinExistence type="inferred from homology"/>